<keyword id="KW-0963">Cytoplasm</keyword>
<keyword id="KW-0378">Hydrolase</keyword>
<keyword id="KW-0479">Metal-binding</keyword>
<keyword id="KW-0533">Nickel</keyword>
<sequence>MPQISRQEYAGLFGPTTGDKIRLGDTNLFIEIEKDLRGYGEESVYGGGKSLRDGMGANNNLTRDNGVLDLVITNVTIVDARLGVIKADVGIRDGKIAGIGKSGNPGVMDGVTQGMVVGVSTDAISGEHLILTAAGIDSHIHLISPQQAYHALSNGVATFFGGGIGPTDGTNGTTVTPGPWNIRQMLRSIEGLPVNVGILGKGNSYGRGPLLEQAIAGVVGYKVHEDWGATANALRHALRMADEVDIQVSVHTDSLNECGYVEDTIDAFEGRTIHTFHTEGAGGGHAPDIIRVASQTNVLPSSTNPTLPYGVNSQAELFDMIMVCHNLNPNVPADVSFAESRVRPETIAAENVLHDMGVISMFSSDSQAMGRVGENWLRILQTADAMKAARGKLPEDAAGNDNFRVLRYVAKITINPAITQGVSHVIGSVEVGKMADLVLWDPRFFGAKPKMVIKGGMINWAAMGDPNASLPTPQPVFYRPMFGAMGKTLQDTCVTFVSQAALDDGVKEKAGLDRQVIAVKNCRTISKRDLVRNDQTPNIEVDPETFAVKVDGVHATCEPIATASMNQRYFFG</sequence>
<dbReference type="EC" id="3.5.1.5" evidence="1"/>
<dbReference type="EMBL" id="CP000901">
    <property type="protein sequence ID" value="ABX88680.1"/>
    <property type="molecule type" value="Genomic_DNA"/>
</dbReference>
<dbReference type="RefSeq" id="WP_002212229.1">
    <property type="nucleotide sequence ID" value="NZ_CP009935.1"/>
</dbReference>
<dbReference type="SMR" id="A9R3V0"/>
<dbReference type="MEROPS" id="M38.982"/>
<dbReference type="KEGG" id="ypg:YpAngola_A3556"/>
<dbReference type="PATRIC" id="fig|349746.12.peg.250"/>
<dbReference type="UniPathway" id="UPA00258">
    <property type="reaction ID" value="UER00370"/>
</dbReference>
<dbReference type="GO" id="GO:0005737">
    <property type="term" value="C:cytoplasm"/>
    <property type="evidence" value="ECO:0007669"/>
    <property type="project" value="UniProtKB-SubCell"/>
</dbReference>
<dbReference type="GO" id="GO:0016151">
    <property type="term" value="F:nickel cation binding"/>
    <property type="evidence" value="ECO:0007669"/>
    <property type="project" value="UniProtKB-UniRule"/>
</dbReference>
<dbReference type="GO" id="GO:0009039">
    <property type="term" value="F:urease activity"/>
    <property type="evidence" value="ECO:0007669"/>
    <property type="project" value="UniProtKB-UniRule"/>
</dbReference>
<dbReference type="GO" id="GO:0043419">
    <property type="term" value="P:urea catabolic process"/>
    <property type="evidence" value="ECO:0007669"/>
    <property type="project" value="UniProtKB-UniRule"/>
</dbReference>
<dbReference type="CDD" id="cd00375">
    <property type="entry name" value="Urease_alpha"/>
    <property type="match status" value="1"/>
</dbReference>
<dbReference type="Gene3D" id="3.20.20.140">
    <property type="entry name" value="Metal-dependent hydrolases"/>
    <property type="match status" value="1"/>
</dbReference>
<dbReference type="Gene3D" id="2.30.40.10">
    <property type="entry name" value="Urease, subunit C, domain 1"/>
    <property type="match status" value="1"/>
</dbReference>
<dbReference type="HAMAP" id="MF_01953">
    <property type="entry name" value="Urease_alpha"/>
    <property type="match status" value="1"/>
</dbReference>
<dbReference type="InterPro" id="IPR006680">
    <property type="entry name" value="Amidohydro-rel"/>
</dbReference>
<dbReference type="InterPro" id="IPR011059">
    <property type="entry name" value="Metal-dep_hydrolase_composite"/>
</dbReference>
<dbReference type="InterPro" id="IPR032466">
    <property type="entry name" value="Metal_Hydrolase"/>
</dbReference>
<dbReference type="InterPro" id="IPR011612">
    <property type="entry name" value="Urease_alpha_N_dom"/>
</dbReference>
<dbReference type="InterPro" id="IPR050112">
    <property type="entry name" value="Urease_alpha_subunit"/>
</dbReference>
<dbReference type="InterPro" id="IPR017950">
    <property type="entry name" value="Urease_AS"/>
</dbReference>
<dbReference type="InterPro" id="IPR005848">
    <property type="entry name" value="Urease_asu"/>
</dbReference>
<dbReference type="InterPro" id="IPR017951">
    <property type="entry name" value="Urease_asu_c"/>
</dbReference>
<dbReference type="InterPro" id="IPR029754">
    <property type="entry name" value="Urease_Ni-bd"/>
</dbReference>
<dbReference type="NCBIfam" id="NF009686">
    <property type="entry name" value="PRK13207.1"/>
    <property type="match status" value="1"/>
</dbReference>
<dbReference type="NCBIfam" id="NF009834">
    <property type="entry name" value="PRK13309.1"/>
    <property type="match status" value="1"/>
</dbReference>
<dbReference type="NCBIfam" id="TIGR01792">
    <property type="entry name" value="urease_alph"/>
    <property type="match status" value="1"/>
</dbReference>
<dbReference type="PANTHER" id="PTHR43440">
    <property type="entry name" value="UREASE"/>
    <property type="match status" value="1"/>
</dbReference>
<dbReference type="PANTHER" id="PTHR43440:SF1">
    <property type="entry name" value="UREASE"/>
    <property type="match status" value="1"/>
</dbReference>
<dbReference type="Pfam" id="PF01979">
    <property type="entry name" value="Amidohydro_1"/>
    <property type="match status" value="1"/>
</dbReference>
<dbReference type="Pfam" id="PF00449">
    <property type="entry name" value="Urease_alpha"/>
    <property type="match status" value="1"/>
</dbReference>
<dbReference type="PRINTS" id="PR01752">
    <property type="entry name" value="UREASE"/>
</dbReference>
<dbReference type="SUPFAM" id="SSF51338">
    <property type="entry name" value="Composite domain of metallo-dependent hydrolases"/>
    <property type="match status" value="1"/>
</dbReference>
<dbReference type="SUPFAM" id="SSF51556">
    <property type="entry name" value="Metallo-dependent hydrolases"/>
    <property type="match status" value="1"/>
</dbReference>
<dbReference type="PROSITE" id="PS01120">
    <property type="entry name" value="UREASE_1"/>
    <property type="match status" value="1"/>
</dbReference>
<dbReference type="PROSITE" id="PS00145">
    <property type="entry name" value="UREASE_2"/>
    <property type="match status" value="1"/>
</dbReference>
<dbReference type="PROSITE" id="PS51368">
    <property type="entry name" value="UREASE_3"/>
    <property type="match status" value="1"/>
</dbReference>
<organism>
    <name type="scientific">Yersinia pestis bv. Antiqua (strain Angola)</name>
    <dbReference type="NCBI Taxonomy" id="349746"/>
    <lineage>
        <taxon>Bacteria</taxon>
        <taxon>Pseudomonadati</taxon>
        <taxon>Pseudomonadota</taxon>
        <taxon>Gammaproteobacteria</taxon>
        <taxon>Enterobacterales</taxon>
        <taxon>Yersiniaceae</taxon>
        <taxon>Yersinia</taxon>
    </lineage>
</organism>
<feature type="chain" id="PRO_1000188899" description="Urease subunit alpha">
    <location>
        <begin position="1"/>
        <end position="572"/>
    </location>
</feature>
<feature type="domain" description="Urease" evidence="1">
    <location>
        <begin position="134"/>
        <end position="572"/>
    </location>
</feature>
<feature type="active site" description="Proton donor" evidence="1">
    <location>
        <position position="325"/>
    </location>
</feature>
<feature type="binding site" evidence="1">
    <location>
        <position position="139"/>
    </location>
    <ligand>
        <name>Ni(2+)</name>
        <dbReference type="ChEBI" id="CHEBI:49786"/>
        <label>1</label>
    </ligand>
</feature>
<feature type="binding site" evidence="1">
    <location>
        <position position="141"/>
    </location>
    <ligand>
        <name>Ni(2+)</name>
        <dbReference type="ChEBI" id="CHEBI:49786"/>
        <label>1</label>
    </ligand>
</feature>
<feature type="binding site" description="via carbamate group" evidence="1">
    <location>
        <position position="222"/>
    </location>
    <ligand>
        <name>Ni(2+)</name>
        <dbReference type="ChEBI" id="CHEBI:49786"/>
        <label>1</label>
    </ligand>
</feature>
<feature type="binding site" description="via carbamate group" evidence="1">
    <location>
        <position position="222"/>
    </location>
    <ligand>
        <name>Ni(2+)</name>
        <dbReference type="ChEBI" id="CHEBI:49786"/>
        <label>2</label>
    </ligand>
</feature>
<feature type="binding site" evidence="1">
    <location>
        <position position="224"/>
    </location>
    <ligand>
        <name>substrate</name>
    </ligand>
</feature>
<feature type="binding site" evidence="1">
    <location>
        <position position="251"/>
    </location>
    <ligand>
        <name>Ni(2+)</name>
        <dbReference type="ChEBI" id="CHEBI:49786"/>
        <label>2</label>
    </ligand>
</feature>
<feature type="binding site" evidence="1">
    <location>
        <position position="277"/>
    </location>
    <ligand>
        <name>Ni(2+)</name>
        <dbReference type="ChEBI" id="CHEBI:49786"/>
        <label>2</label>
    </ligand>
</feature>
<feature type="binding site" evidence="1">
    <location>
        <position position="365"/>
    </location>
    <ligand>
        <name>Ni(2+)</name>
        <dbReference type="ChEBI" id="CHEBI:49786"/>
        <label>1</label>
    </ligand>
</feature>
<feature type="modified residue" description="N6-carboxylysine" evidence="1">
    <location>
        <position position="222"/>
    </location>
</feature>
<name>URE1_YERPG</name>
<accession>A9R3V0</accession>
<protein>
    <recommendedName>
        <fullName evidence="1">Urease subunit alpha</fullName>
        <ecNumber evidence="1">3.5.1.5</ecNumber>
    </recommendedName>
    <alternativeName>
        <fullName evidence="1">Urea amidohydrolase subunit alpha</fullName>
    </alternativeName>
</protein>
<evidence type="ECO:0000255" key="1">
    <source>
        <dbReference type="HAMAP-Rule" id="MF_01953"/>
    </source>
</evidence>
<gene>
    <name evidence="1" type="primary">ureC</name>
    <name type="ordered locus">YpAngola_A3556</name>
</gene>
<proteinExistence type="inferred from homology"/>
<reference key="1">
    <citation type="journal article" date="2010" name="J. Bacteriol.">
        <title>Genome sequence of the deep-rooted Yersinia pestis strain Angola reveals new insights into the evolution and pangenome of the plague bacterium.</title>
        <authorList>
            <person name="Eppinger M."/>
            <person name="Worsham P.L."/>
            <person name="Nikolich M.P."/>
            <person name="Riley D.R."/>
            <person name="Sebastian Y."/>
            <person name="Mou S."/>
            <person name="Achtman M."/>
            <person name="Lindler L.E."/>
            <person name="Ravel J."/>
        </authorList>
    </citation>
    <scope>NUCLEOTIDE SEQUENCE [LARGE SCALE GENOMIC DNA]</scope>
    <source>
        <strain>Angola</strain>
    </source>
</reference>
<comment type="catalytic activity">
    <reaction evidence="1">
        <text>urea + 2 H2O + H(+) = hydrogencarbonate + 2 NH4(+)</text>
        <dbReference type="Rhea" id="RHEA:20557"/>
        <dbReference type="ChEBI" id="CHEBI:15377"/>
        <dbReference type="ChEBI" id="CHEBI:15378"/>
        <dbReference type="ChEBI" id="CHEBI:16199"/>
        <dbReference type="ChEBI" id="CHEBI:17544"/>
        <dbReference type="ChEBI" id="CHEBI:28938"/>
        <dbReference type="EC" id="3.5.1.5"/>
    </reaction>
</comment>
<comment type="cofactor">
    <cofactor evidence="1">
        <name>Ni cation</name>
        <dbReference type="ChEBI" id="CHEBI:25516"/>
    </cofactor>
    <text evidence="1">Binds 2 nickel ions per subunit.</text>
</comment>
<comment type="pathway">
    <text evidence="1">Nitrogen metabolism; urea degradation; CO(2) and NH(3) from urea (urease route): step 1/1.</text>
</comment>
<comment type="subunit">
    <text evidence="1">Heterotrimer of UreA (gamma), UreB (beta) and UreC (alpha) subunits. Three heterotrimers associate to form the active enzyme.</text>
</comment>
<comment type="subcellular location">
    <subcellularLocation>
        <location evidence="1">Cytoplasm</location>
    </subcellularLocation>
</comment>
<comment type="PTM">
    <text evidence="1">Carboxylation allows a single lysine to coordinate two nickel ions.</text>
</comment>
<comment type="similarity">
    <text evidence="1">Belongs to the metallo-dependent hydrolases superfamily. Urease alpha subunit family.</text>
</comment>